<feature type="chain" id="PRO_1000136762" description="Ribosome maturation factor RimP">
    <location>
        <begin position="1"/>
        <end position="150"/>
    </location>
</feature>
<proteinExistence type="inferred from homology"/>
<gene>
    <name evidence="1" type="primary">rimP</name>
    <name type="ordered locus">Fphi_0946</name>
</gene>
<reference key="1">
    <citation type="submission" date="2007-12" db="EMBL/GenBank/DDBJ databases">
        <title>Complete sequence of chromosome of Francisella philomiragia subsp. philomiragia ATCC 25017.</title>
        <authorList>
            <consortium name="US DOE Joint Genome Institute"/>
            <person name="Copeland A."/>
            <person name="Lucas S."/>
            <person name="Lapidus A."/>
            <person name="Barry K."/>
            <person name="Detter J.C."/>
            <person name="Glavina del Rio T."/>
            <person name="Hammon N."/>
            <person name="Israni S."/>
            <person name="Dalin E."/>
            <person name="Tice H."/>
            <person name="Pitluck S."/>
            <person name="Chain P."/>
            <person name="Malfatti S."/>
            <person name="Shin M."/>
            <person name="Vergez L."/>
            <person name="Schmutz J."/>
            <person name="Larimer F."/>
            <person name="Land M."/>
            <person name="Hauser L."/>
            <person name="Richardson P."/>
        </authorList>
    </citation>
    <scope>NUCLEOTIDE SEQUENCE [LARGE SCALE GENOMIC DNA]</scope>
    <source>
        <strain>ATCC 25017 / CCUG 19701 / FSC 153 / O#319-036</strain>
    </source>
</reference>
<comment type="function">
    <text evidence="1">Required for maturation of 30S ribosomal subunits.</text>
</comment>
<comment type="subcellular location">
    <subcellularLocation>
        <location evidence="1">Cytoplasm</location>
    </subcellularLocation>
</comment>
<comment type="similarity">
    <text evidence="1">Belongs to the RimP family.</text>
</comment>
<accession>B0TWR1</accession>
<evidence type="ECO:0000255" key="1">
    <source>
        <dbReference type="HAMAP-Rule" id="MF_01077"/>
    </source>
</evidence>
<organism>
    <name type="scientific">Francisella philomiragia subsp. philomiragia (strain ATCC 25017 / CCUG 19701 / FSC 153 / O#319-036)</name>
    <dbReference type="NCBI Taxonomy" id="484022"/>
    <lineage>
        <taxon>Bacteria</taxon>
        <taxon>Pseudomonadati</taxon>
        <taxon>Pseudomonadota</taxon>
        <taxon>Gammaproteobacteria</taxon>
        <taxon>Thiotrichales</taxon>
        <taxon>Francisellaceae</taxon>
        <taxon>Francisella</taxon>
    </lineage>
</organism>
<keyword id="KW-0963">Cytoplasm</keyword>
<keyword id="KW-0690">Ribosome biogenesis</keyword>
<sequence length="150" mass="16725">MLLDDLYEIVEPITADLGYILWGIEVVGAGKLTIRIFIDHENGVSVDDCQVVSKEVSAIFDVEDPISDKYVLEVSSPGMNRQIFNIIQAQALVGFNVKAVTLTPVESQTKFKGVLERVEGNNVILKLDDGREVSFDFDELKKFRVSPDFS</sequence>
<name>RIMP_FRAP2</name>
<protein>
    <recommendedName>
        <fullName evidence="1">Ribosome maturation factor RimP</fullName>
    </recommendedName>
</protein>
<dbReference type="EMBL" id="CP000937">
    <property type="protein sequence ID" value="ABZ87169.1"/>
    <property type="molecule type" value="Genomic_DNA"/>
</dbReference>
<dbReference type="SMR" id="B0TWR1"/>
<dbReference type="KEGG" id="fph:Fphi_0946"/>
<dbReference type="eggNOG" id="COG0779">
    <property type="taxonomic scope" value="Bacteria"/>
</dbReference>
<dbReference type="HOGENOM" id="CLU_070525_1_1_6"/>
<dbReference type="GO" id="GO:0005829">
    <property type="term" value="C:cytosol"/>
    <property type="evidence" value="ECO:0007669"/>
    <property type="project" value="TreeGrafter"/>
</dbReference>
<dbReference type="GO" id="GO:0000028">
    <property type="term" value="P:ribosomal small subunit assembly"/>
    <property type="evidence" value="ECO:0007669"/>
    <property type="project" value="TreeGrafter"/>
</dbReference>
<dbReference type="GO" id="GO:0006412">
    <property type="term" value="P:translation"/>
    <property type="evidence" value="ECO:0007669"/>
    <property type="project" value="TreeGrafter"/>
</dbReference>
<dbReference type="CDD" id="cd01734">
    <property type="entry name" value="YlxS_C"/>
    <property type="match status" value="1"/>
</dbReference>
<dbReference type="FunFam" id="3.30.300.70:FF:000001">
    <property type="entry name" value="Ribosome maturation factor RimP"/>
    <property type="match status" value="1"/>
</dbReference>
<dbReference type="Gene3D" id="2.30.30.180">
    <property type="entry name" value="Ribosome maturation factor RimP, C-terminal domain"/>
    <property type="match status" value="1"/>
</dbReference>
<dbReference type="Gene3D" id="3.30.300.70">
    <property type="entry name" value="RimP-like superfamily, N-terminal"/>
    <property type="match status" value="1"/>
</dbReference>
<dbReference type="HAMAP" id="MF_01077">
    <property type="entry name" value="RimP"/>
    <property type="match status" value="1"/>
</dbReference>
<dbReference type="InterPro" id="IPR003728">
    <property type="entry name" value="Ribosome_maturation_RimP"/>
</dbReference>
<dbReference type="InterPro" id="IPR028998">
    <property type="entry name" value="RimP_C"/>
</dbReference>
<dbReference type="InterPro" id="IPR036847">
    <property type="entry name" value="RimP_C_sf"/>
</dbReference>
<dbReference type="InterPro" id="IPR028989">
    <property type="entry name" value="RimP_N"/>
</dbReference>
<dbReference type="InterPro" id="IPR035956">
    <property type="entry name" value="RimP_N_sf"/>
</dbReference>
<dbReference type="NCBIfam" id="NF011226">
    <property type="entry name" value="PRK14633.1"/>
    <property type="match status" value="1"/>
</dbReference>
<dbReference type="PANTHER" id="PTHR33867">
    <property type="entry name" value="RIBOSOME MATURATION FACTOR RIMP"/>
    <property type="match status" value="1"/>
</dbReference>
<dbReference type="PANTHER" id="PTHR33867:SF1">
    <property type="entry name" value="RIBOSOME MATURATION FACTOR RIMP"/>
    <property type="match status" value="1"/>
</dbReference>
<dbReference type="Pfam" id="PF17384">
    <property type="entry name" value="DUF150_C"/>
    <property type="match status" value="1"/>
</dbReference>
<dbReference type="Pfam" id="PF02576">
    <property type="entry name" value="RimP_N"/>
    <property type="match status" value="1"/>
</dbReference>
<dbReference type="SUPFAM" id="SSF74942">
    <property type="entry name" value="YhbC-like, C-terminal domain"/>
    <property type="match status" value="1"/>
</dbReference>
<dbReference type="SUPFAM" id="SSF75420">
    <property type="entry name" value="YhbC-like, N-terminal domain"/>
    <property type="match status" value="1"/>
</dbReference>